<comment type="function">
    <text evidence="1">RNA-binding component of the eukaryotic translation initiation factor 3 (eIF-3) complex, which is involved in protein synthesis of a specialized repertoire of mRNAs and, together with other initiation factors, stimulates binding of mRNA and methionyl-tRNAi to the 40S ribosome. The eIF-3 complex specifically targets and initiates translation of a subset of mRNAs involved in cell proliferation.</text>
</comment>
<comment type="subunit">
    <text evidence="1">Component of the eukaryotic translation initiation factor 3 (eIF-3) complex.</text>
</comment>
<comment type="subcellular location">
    <subcellularLocation>
        <location evidence="1">Cytoplasm</location>
    </subcellularLocation>
</comment>
<comment type="similarity">
    <text evidence="1">Belongs to the eIF-3 subunit A family.</text>
</comment>
<sequence length="1096" mass="126535">MPPNFFQKPETALKRAHELISVGKEMDALETLHDTIKSKRHKQWTKTHEAIMLKHMELCVSLRRPHMAKDALFQYKTLTQQVAIKSLETVIQRFLELAQQKTEEAQKTSIEKVEEIDDLDQADAPENLLLSAVSGDAAQDRMDRTVLSPWLRFLWDSYRNCLDLLRNTAVVEQLYHRIARQSFEFCAKYQRRTEFRKLCDNLRLHLTQIQKHQHLAHVVKLTSAESLTLMQDTRLIQLDTAIQMELWQEAYRSAEDVHGMMQLSKDKDERMVKPASYVNYYDKLALVFWKAGNRLFHAAALLQKYIIYKDMKKTFSMEEAMDQATRVLLATLAIPDGADNPSDLTRHLDIEEQHIANMRLLSNLLRLPVAPTRAGILKEITRLNLPDVAVESARTLYRLLECNFAPLRLASQIQAELTKVTELNRAEYNQYVEALKGVTATKIIKQISVIYDTLSIGRIQKVIPFYNGDELERFLVDIAKHRYVKARIDHRGGSIHFGAADAALSGFFDLEVSDGFGGEAEQVAVEDIRNHLQSMYNNLRDAVQVLDYEKIKRAATDDLKRHAEIYLYHKDADYERILLRRKKIESYKETSERQKLEKCQQAQAEANRKEEQRRAEEMRRLEQENIEKEKLRRLAEQEEIDRKVRAEKMKKIQATPIYQAIVKDHGEEAFQNMDPDSVLREQRDRLDEQRREQQARLQQQEKKFDHLIRAYHLQEMVARKAISDNFAVKAPQNHDSYEKRRVENAIKDHENAVAVYERMQKVRKDPDAAAFLESVKKARADDFNKKIRGFGRRNCVMRNENVLKNRHELPKEGAEERMASAREVAEQTRRDEQEKERRAVRESQRPSKREIVENSEMDSDWRKSAQPTQPRTISSKPFGERFVEGERYRESGAVTASEADSGPWVRGNVTGSQRQQDVPIRNIERPAVPSRFSNREQARGEADSTTNWRKGQVAQRDRDQSVGKQPLMEKRGEPSGAQLHDVKAVATPSPADAGPWRRGMIVARDQADSSQRTSAATPTTQPWRPSRLRQADGAPVNGAPSGRILEGSGSNEPSIGKWNRSIQRTGDSHGAQSFRGISQHQQRRGAADDDRNWRQK</sequence>
<proteinExistence type="inferred from homology"/>
<evidence type="ECO:0000255" key="1">
    <source>
        <dbReference type="HAMAP-Rule" id="MF_03000"/>
    </source>
</evidence>
<evidence type="ECO:0000255" key="2">
    <source>
        <dbReference type="PROSITE-ProRule" id="PRU01185"/>
    </source>
</evidence>
<evidence type="ECO:0000256" key="3">
    <source>
        <dbReference type="SAM" id="MobiDB-lite"/>
    </source>
</evidence>
<accession>A8PKH2</accession>
<organism>
    <name type="scientific">Brugia malayi</name>
    <name type="common">Filarial nematode worm</name>
    <dbReference type="NCBI Taxonomy" id="6279"/>
    <lineage>
        <taxon>Eukaryota</taxon>
        <taxon>Metazoa</taxon>
        <taxon>Ecdysozoa</taxon>
        <taxon>Nematoda</taxon>
        <taxon>Chromadorea</taxon>
        <taxon>Rhabditida</taxon>
        <taxon>Spirurina</taxon>
        <taxon>Spiruromorpha</taxon>
        <taxon>Filarioidea</taxon>
        <taxon>Onchocercidae</taxon>
        <taxon>Brugia</taxon>
    </lineage>
</organism>
<name>EIF3A_BRUMA</name>
<protein>
    <recommendedName>
        <fullName evidence="1">Eukaryotic translation initiation factor 3 subunit A</fullName>
        <shortName evidence="1">eIF3a</shortName>
    </recommendedName>
    <alternativeName>
        <fullName evidence="1">Eukaryotic translation initiation factor 3 subunit 10</fullName>
    </alternativeName>
</protein>
<gene>
    <name type="ORF">Bm1_29045</name>
</gene>
<keyword id="KW-0175">Coiled coil</keyword>
<keyword id="KW-0963">Cytoplasm</keyword>
<keyword id="KW-0396">Initiation factor</keyword>
<keyword id="KW-0648">Protein biosynthesis</keyword>
<keyword id="KW-1185">Reference proteome</keyword>
<keyword id="KW-0694">RNA-binding</keyword>
<reference key="1">
    <citation type="journal article" date="2007" name="Science">
        <title>Draft genome of the filarial nematode parasite Brugia malayi.</title>
        <authorList>
            <person name="Ghedin E."/>
            <person name="Wang S."/>
            <person name="Spiro D."/>
            <person name="Caler E."/>
            <person name="Zhao Q."/>
            <person name="Crabtree J."/>
            <person name="Allen J.E."/>
            <person name="Delcher A.L."/>
            <person name="Guiliano D.B."/>
            <person name="Miranda-Saavedra D."/>
            <person name="Angiuoli S.V."/>
            <person name="Creasy T."/>
            <person name="Amedeo P."/>
            <person name="Haas B."/>
            <person name="El-Sayed N.M."/>
            <person name="Wortman J.R."/>
            <person name="Feldblyum T."/>
            <person name="Tallon L."/>
            <person name="Schatz M."/>
            <person name="Shumway M."/>
            <person name="Koo H."/>
            <person name="Salzberg S.L."/>
            <person name="Schobel S."/>
            <person name="Pertea M."/>
            <person name="Pop M."/>
            <person name="White O."/>
            <person name="Barton G.J."/>
            <person name="Carlow C.K.S."/>
            <person name="Crawford M.J."/>
            <person name="Daub J."/>
            <person name="Dimmic M.W."/>
            <person name="Estes C.F."/>
            <person name="Foster J.M."/>
            <person name="Ganatra M."/>
            <person name="Gregory W.F."/>
            <person name="Johnson N.M."/>
            <person name="Jin J."/>
            <person name="Komuniecki R."/>
            <person name="Korf I."/>
            <person name="Kumar S."/>
            <person name="Laney S."/>
            <person name="Li B.-W."/>
            <person name="Li W."/>
            <person name="Lindblom T.H."/>
            <person name="Lustigman S."/>
            <person name="Ma D."/>
            <person name="Maina C.V."/>
            <person name="Martin D.M."/>
            <person name="McCarter J.P."/>
            <person name="McReynolds L."/>
            <person name="Mitreva M."/>
            <person name="Nutman T.B."/>
            <person name="Parkinson J."/>
            <person name="Peregrin-Alvarez J.M."/>
            <person name="Poole C."/>
            <person name="Ren Q."/>
            <person name="Saunders L."/>
            <person name="Sluder A.E."/>
            <person name="Smith K."/>
            <person name="Stanke M."/>
            <person name="Unnasch T.R."/>
            <person name="Ware J."/>
            <person name="Wei A.D."/>
            <person name="Weil G."/>
            <person name="Williams D.J."/>
            <person name="Zhang Y."/>
            <person name="Williams S.A."/>
            <person name="Fraser-Liggett C."/>
            <person name="Slatko B."/>
            <person name="Blaxter M.L."/>
            <person name="Scott A.L."/>
        </authorList>
    </citation>
    <scope>NUCLEOTIDE SEQUENCE [LARGE SCALE GENOMIC DNA]</scope>
</reference>
<dbReference type="EMBL" id="DS239377">
    <property type="protein sequence ID" value="EDP33905.1"/>
    <property type="molecule type" value="Genomic_DNA"/>
</dbReference>
<dbReference type="RefSeq" id="XP_001897252.1">
    <property type="nucleotide sequence ID" value="XM_001897217.1"/>
</dbReference>
<dbReference type="SMR" id="A8PKH2"/>
<dbReference type="FunCoup" id="A8PKH2">
    <property type="interactions" value="2446"/>
</dbReference>
<dbReference type="STRING" id="6279.A8PKH2"/>
<dbReference type="WormBase" id="Bm2433">
    <property type="protein sequence ID" value="BM42517"/>
    <property type="gene ID" value="WBGene00222694"/>
    <property type="gene designation" value="Bma-egl-45"/>
</dbReference>
<dbReference type="InParanoid" id="A8PKH2"/>
<dbReference type="Proteomes" id="UP000006672">
    <property type="component" value="Unassembled WGS sequence"/>
</dbReference>
<dbReference type="GO" id="GO:0016282">
    <property type="term" value="C:eukaryotic 43S preinitiation complex"/>
    <property type="evidence" value="ECO:0007669"/>
    <property type="project" value="UniProtKB-UniRule"/>
</dbReference>
<dbReference type="GO" id="GO:0033290">
    <property type="term" value="C:eukaryotic 48S preinitiation complex"/>
    <property type="evidence" value="ECO:0007669"/>
    <property type="project" value="UniProtKB-UniRule"/>
</dbReference>
<dbReference type="GO" id="GO:0071540">
    <property type="term" value="C:eukaryotic translation initiation factor 3 complex, eIF3e"/>
    <property type="evidence" value="ECO:0007669"/>
    <property type="project" value="TreeGrafter"/>
</dbReference>
<dbReference type="GO" id="GO:0071541">
    <property type="term" value="C:eukaryotic translation initiation factor 3 complex, eIF3m"/>
    <property type="evidence" value="ECO:0007669"/>
    <property type="project" value="TreeGrafter"/>
</dbReference>
<dbReference type="GO" id="GO:0043614">
    <property type="term" value="C:multi-eIF complex"/>
    <property type="evidence" value="ECO:0007669"/>
    <property type="project" value="TreeGrafter"/>
</dbReference>
<dbReference type="GO" id="GO:0003729">
    <property type="term" value="F:mRNA binding"/>
    <property type="evidence" value="ECO:0007669"/>
    <property type="project" value="TreeGrafter"/>
</dbReference>
<dbReference type="GO" id="GO:0003743">
    <property type="term" value="F:translation initiation factor activity"/>
    <property type="evidence" value="ECO:0007669"/>
    <property type="project" value="UniProtKB-UniRule"/>
</dbReference>
<dbReference type="GO" id="GO:0001732">
    <property type="term" value="P:formation of cytoplasmic translation initiation complex"/>
    <property type="evidence" value="ECO:0007669"/>
    <property type="project" value="UniProtKB-UniRule"/>
</dbReference>
<dbReference type="GO" id="GO:0002188">
    <property type="term" value="P:translation reinitiation"/>
    <property type="evidence" value="ECO:0007669"/>
    <property type="project" value="TreeGrafter"/>
</dbReference>
<dbReference type="FunFam" id="4.10.860.10:FF:000001">
    <property type="entry name" value="Eukaryotic translation initiation factor 3 subunit A"/>
    <property type="match status" value="1"/>
</dbReference>
<dbReference type="Gene3D" id="1.25.40.860">
    <property type="match status" value="1"/>
</dbReference>
<dbReference type="Gene3D" id="4.10.860.10">
    <property type="entry name" value="UVR domain"/>
    <property type="match status" value="1"/>
</dbReference>
<dbReference type="HAMAP" id="MF_03000">
    <property type="entry name" value="eIF3a"/>
    <property type="match status" value="1"/>
</dbReference>
<dbReference type="InterPro" id="IPR027512">
    <property type="entry name" value="EIF3A"/>
</dbReference>
<dbReference type="InterPro" id="IPR054711">
    <property type="entry name" value="eIF3a_PCI_TPR-like"/>
</dbReference>
<dbReference type="InterPro" id="IPR000717">
    <property type="entry name" value="PCI_dom"/>
</dbReference>
<dbReference type="PANTHER" id="PTHR14005:SF0">
    <property type="entry name" value="EUKARYOTIC TRANSLATION INITIATION FACTOR 3 SUBUNIT A"/>
    <property type="match status" value="1"/>
</dbReference>
<dbReference type="PANTHER" id="PTHR14005">
    <property type="entry name" value="EUKARYOTIC TRANSLATION INITIATION FACTOR 3, THETA SUBUNIT"/>
    <property type="match status" value="1"/>
</dbReference>
<dbReference type="Pfam" id="PF22591">
    <property type="entry name" value="eIF3a_PCI_TPR-like"/>
    <property type="match status" value="1"/>
</dbReference>
<dbReference type="Pfam" id="PF01399">
    <property type="entry name" value="PCI"/>
    <property type="match status" value="1"/>
</dbReference>
<dbReference type="SMART" id="SM00088">
    <property type="entry name" value="PINT"/>
    <property type="match status" value="1"/>
</dbReference>
<dbReference type="PROSITE" id="PS50250">
    <property type="entry name" value="PCI"/>
    <property type="match status" value="1"/>
</dbReference>
<feature type="chain" id="PRO_0000366347" description="Eukaryotic translation initiation factor 3 subunit A">
    <location>
        <begin position="1"/>
        <end position="1096"/>
    </location>
</feature>
<feature type="domain" description="PCI" evidence="2">
    <location>
        <begin position="323"/>
        <end position="502"/>
    </location>
</feature>
<feature type="region of interest" description="Disordered" evidence="3">
    <location>
        <begin position="808"/>
        <end position="1096"/>
    </location>
</feature>
<feature type="coiled-coil region" evidence="1">
    <location>
        <begin position="591"/>
        <end position="643"/>
    </location>
</feature>
<feature type="coiled-coil region" evidence="1">
    <location>
        <begin position="677"/>
        <end position="761"/>
    </location>
</feature>
<feature type="coiled-coil region" evidence="1">
    <location>
        <begin position="811"/>
        <end position="839"/>
    </location>
</feature>
<feature type="compositionally biased region" description="Basic and acidic residues" evidence="3">
    <location>
        <begin position="808"/>
        <end position="852"/>
    </location>
</feature>
<feature type="compositionally biased region" description="Polar residues" evidence="3">
    <location>
        <begin position="865"/>
        <end position="875"/>
    </location>
</feature>
<feature type="compositionally biased region" description="Basic and acidic residues" evidence="3">
    <location>
        <begin position="878"/>
        <end position="890"/>
    </location>
</feature>
<feature type="compositionally biased region" description="Basic and acidic residues" evidence="3">
    <location>
        <begin position="933"/>
        <end position="942"/>
    </location>
</feature>
<feature type="compositionally biased region" description="Basic and acidic residues" evidence="3">
    <location>
        <begin position="955"/>
        <end position="973"/>
    </location>
</feature>
<feature type="compositionally biased region" description="Polar residues" evidence="3">
    <location>
        <begin position="1008"/>
        <end position="1023"/>
    </location>
</feature>
<feature type="compositionally biased region" description="Basic and acidic residues" evidence="3">
    <location>
        <begin position="1085"/>
        <end position="1096"/>
    </location>
</feature>